<organism>
    <name type="scientific">Mesembryanthemum crystallinum</name>
    <name type="common">Common ice plant</name>
    <name type="synonym">Cryophytum crystallinum</name>
    <dbReference type="NCBI Taxonomy" id="3544"/>
    <lineage>
        <taxon>Eukaryota</taxon>
        <taxon>Viridiplantae</taxon>
        <taxon>Streptophyta</taxon>
        <taxon>Embryophyta</taxon>
        <taxon>Tracheophyta</taxon>
        <taxon>Spermatophyta</taxon>
        <taxon>Magnoliopsida</taxon>
        <taxon>eudicotyledons</taxon>
        <taxon>Gunneridae</taxon>
        <taxon>Pentapetalae</taxon>
        <taxon>Caryophyllales</taxon>
        <taxon>Aizoaceae</taxon>
        <taxon>Mesembryanthemum</taxon>
        <taxon>Mesembryanthemum subgen. Cryophytum</taxon>
    </lineage>
</organism>
<reference key="1">
    <citation type="journal article" date="1996" name="Plant J.">
        <title>Salt regulation of transcript levels for the c subunit of a leaf vacuolar H(+)-ATPase in the halophyte Mesembryanthemum crystallinum.</title>
        <authorList>
            <person name="Tsiantis M.S."/>
            <person name="Bartholomew D.M."/>
            <person name="Smith J.A."/>
        </authorList>
    </citation>
    <scope>NUCLEOTIDE SEQUENCE [MRNA]</scope>
</reference>
<protein>
    <recommendedName>
        <fullName>V-type proton ATPase 16 kDa proteolipid subunit</fullName>
        <shortName>V-ATPase 16 kDa proteolipid subunit</shortName>
    </recommendedName>
    <alternativeName>
        <fullName>Vacuolar proton pump 16 kDa proteolipid subunit</fullName>
    </alternativeName>
</protein>
<evidence type="ECO:0000250" key="1"/>
<evidence type="ECO:0000255" key="2"/>
<evidence type="ECO:0000305" key="3"/>
<name>VATL_MESCR</name>
<proteinExistence type="evidence at transcript level"/>
<gene>
    <name type="primary">VMAC1</name>
</gene>
<sequence>MSTVFNGDETAPFFGFLGAAAALVFSCMGAAYGTAKSGVGVASMGVMRPELVMKSIVPVVMAGVLGIYGLIIAVIISTGINPKAKSYYLFDGYAHLSSGLACGLAGLSAGMAIGIVGDAGVRANAQQPKLFVGMILILIFAEALALYGLIVGIILSSRAGQSRAD</sequence>
<accession>P68161</accession>
<accession>Q39437</accession>
<dbReference type="EMBL" id="X94999">
    <property type="protein sequence ID" value="CAA64455.1"/>
    <property type="molecule type" value="mRNA"/>
</dbReference>
<dbReference type="SMR" id="P68161"/>
<dbReference type="GO" id="GO:0033179">
    <property type="term" value="C:proton-transporting V-type ATPase, V0 domain"/>
    <property type="evidence" value="ECO:0007669"/>
    <property type="project" value="InterPro"/>
</dbReference>
<dbReference type="GO" id="GO:0005774">
    <property type="term" value="C:vacuolar membrane"/>
    <property type="evidence" value="ECO:0007669"/>
    <property type="project" value="UniProtKB-SubCell"/>
</dbReference>
<dbReference type="GO" id="GO:0046961">
    <property type="term" value="F:proton-transporting ATPase activity, rotational mechanism"/>
    <property type="evidence" value="ECO:0007669"/>
    <property type="project" value="InterPro"/>
</dbReference>
<dbReference type="CDD" id="cd18175">
    <property type="entry name" value="ATP-synt_Vo_c_ATP6C_rpt1"/>
    <property type="match status" value="1"/>
</dbReference>
<dbReference type="CDD" id="cd18176">
    <property type="entry name" value="ATP-synt_Vo_c_ATP6C_rpt2"/>
    <property type="match status" value="1"/>
</dbReference>
<dbReference type="FunFam" id="1.20.120.610:FF:000003">
    <property type="entry name" value="V-type proton ATPase proteolipid subunit"/>
    <property type="match status" value="1"/>
</dbReference>
<dbReference type="Gene3D" id="1.20.120.610">
    <property type="entry name" value="lithium bound rotor ring of v- atpase"/>
    <property type="match status" value="1"/>
</dbReference>
<dbReference type="InterPro" id="IPR002379">
    <property type="entry name" value="ATPase_proteolipid_c-like_dom"/>
</dbReference>
<dbReference type="InterPro" id="IPR000245">
    <property type="entry name" value="ATPase_proteolipid_csu"/>
</dbReference>
<dbReference type="InterPro" id="IPR011555">
    <property type="entry name" value="ATPase_proteolipid_su_C_euk"/>
</dbReference>
<dbReference type="InterPro" id="IPR035921">
    <property type="entry name" value="F/V-ATP_Csub_sf"/>
</dbReference>
<dbReference type="NCBIfam" id="TIGR01100">
    <property type="entry name" value="V_ATP_synt_C"/>
    <property type="match status" value="1"/>
</dbReference>
<dbReference type="PANTHER" id="PTHR10263">
    <property type="entry name" value="V-TYPE PROTON ATPASE PROTEOLIPID SUBUNIT"/>
    <property type="match status" value="1"/>
</dbReference>
<dbReference type="Pfam" id="PF00137">
    <property type="entry name" value="ATP-synt_C"/>
    <property type="match status" value="2"/>
</dbReference>
<dbReference type="PRINTS" id="PR00122">
    <property type="entry name" value="VACATPASE"/>
</dbReference>
<dbReference type="SUPFAM" id="SSF81333">
    <property type="entry name" value="F1F0 ATP synthase subunit C"/>
    <property type="match status" value="2"/>
</dbReference>
<keyword id="KW-0375">Hydrogen ion transport</keyword>
<keyword id="KW-0406">Ion transport</keyword>
<keyword id="KW-0472">Membrane</keyword>
<keyword id="KW-0812">Transmembrane</keyword>
<keyword id="KW-1133">Transmembrane helix</keyword>
<keyword id="KW-0813">Transport</keyword>
<keyword id="KW-0926">Vacuole</keyword>
<feature type="chain" id="PRO_0000071772" description="V-type proton ATPase 16 kDa proteolipid subunit">
    <location>
        <begin position="1"/>
        <end position="165"/>
    </location>
</feature>
<feature type="topological domain" description="Lumenal" evidence="2">
    <location>
        <begin position="1"/>
        <end position="12"/>
    </location>
</feature>
<feature type="transmembrane region" description="Helical" evidence="2">
    <location>
        <begin position="13"/>
        <end position="33"/>
    </location>
</feature>
<feature type="topological domain" description="Cytoplasmic" evidence="2">
    <location>
        <begin position="34"/>
        <end position="55"/>
    </location>
</feature>
<feature type="transmembrane region" description="Helical" evidence="2">
    <location>
        <begin position="56"/>
        <end position="76"/>
    </location>
</feature>
<feature type="topological domain" description="Lumenal" evidence="2">
    <location>
        <begin position="77"/>
        <end position="95"/>
    </location>
</feature>
<feature type="transmembrane region" description="Helical" evidence="2">
    <location>
        <begin position="96"/>
        <end position="117"/>
    </location>
</feature>
<feature type="topological domain" description="Cytoplasmic" evidence="2">
    <location>
        <begin position="118"/>
        <end position="129"/>
    </location>
</feature>
<feature type="transmembrane region" description="Helical" evidence="2">
    <location>
        <begin position="130"/>
        <end position="155"/>
    </location>
</feature>
<feature type="topological domain" description="Lumenal" evidence="2">
    <location>
        <begin position="156"/>
        <end position="165"/>
    </location>
</feature>
<feature type="site" description="Essential for proton translocation" evidence="1">
    <location>
        <position position="142"/>
    </location>
</feature>
<comment type="function">
    <text>Proton-conducting pore forming subunit of the membrane integral V0 complex of vacuolar ATPase. V-ATPase is responsible for acidifying a variety of intracellular compartments in eukaryotic cells.</text>
</comment>
<comment type="subunit">
    <text>V-ATPase is a heteromultimeric enzyme composed of a peripheral catalytic V1 complex (main components: subunits A, B, C, D, E, and F) attached to an integral membrane V0 proton pore complex (main component: the proteolipid protein; which is present as a hexamer that forms the proton-conducting pore).</text>
</comment>
<comment type="subcellular location">
    <subcellularLocation>
        <location>Vacuole membrane</location>
        <topology>Multi-pass membrane protein</topology>
    </subcellularLocation>
    <text>Tonoplast.</text>
</comment>
<comment type="similarity">
    <text evidence="3">Belongs to the V-ATPase proteolipid subunit family.</text>
</comment>